<accession>Q6D076</accession>
<dbReference type="EMBL" id="BX950851">
    <property type="protein sequence ID" value="CAG76822.1"/>
    <property type="molecule type" value="Genomic_DNA"/>
</dbReference>
<dbReference type="RefSeq" id="WP_011095421.1">
    <property type="nucleotide sequence ID" value="NC_004547.2"/>
</dbReference>
<dbReference type="SMR" id="Q6D076"/>
<dbReference type="STRING" id="218491.ECA3925"/>
<dbReference type="KEGG" id="eca:ECA3925"/>
<dbReference type="PATRIC" id="fig|218491.5.peg.3990"/>
<dbReference type="eggNOG" id="COG1678">
    <property type="taxonomic scope" value="Bacteria"/>
</dbReference>
<dbReference type="HOGENOM" id="CLU_057596_1_0_6"/>
<dbReference type="OrthoDB" id="9807486at2"/>
<dbReference type="Proteomes" id="UP000007966">
    <property type="component" value="Chromosome"/>
</dbReference>
<dbReference type="GO" id="GO:0005829">
    <property type="term" value="C:cytosol"/>
    <property type="evidence" value="ECO:0007669"/>
    <property type="project" value="TreeGrafter"/>
</dbReference>
<dbReference type="Gene3D" id="3.40.1740.10">
    <property type="entry name" value="VC0467-like"/>
    <property type="match status" value="1"/>
</dbReference>
<dbReference type="HAMAP" id="MF_00758">
    <property type="entry name" value="UPF0301"/>
    <property type="match status" value="1"/>
</dbReference>
<dbReference type="InterPro" id="IPR003774">
    <property type="entry name" value="AlgH-like"/>
</dbReference>
<dbReference type="NCBIfam" id="NF001266">
    <property type="entry name" value="PRK00228.1-1"/>
    <property type="match status" value="1"/>
</dbReference>
<dbReference type="PANTHER" id="PTHR30327">
    <property type="entry name" value="UNCHARACTERIZED PROTEIN YQGE"/>
    <property type="match status" value="1"/>
</dbReference>
<dbReference type="PANTHER" id="PTHR30327:SF1">
    <property type="entry name" value="UPF0301 PROTEIN YQGE"/>
    <property type="match status" value="1"/>
</dbReference>
<dbReference type="Pfam" id="PF02622">
    <property type="entry name" value="DUF179"/>
    <property type="match status" value="1"/>
</dbReference>
<dbReference type="SUPFAM" id="SSF143456">
    <property type="entry name" value="VC0467-like"/>
    <property type="match status" value="1"/>
</dbReference>
<keyword id="KW-1185">Reference proteome</keyword>
<protein>
    <recommendedName>
        <fullName evidence="1">UPF0301 protein ECA3925</fullName>
    </recommendedName>
</protein>
<name>Y3925_PECAS</name>
<reference key="1">
    <citation type="journal article" date="2004" name="Proc. Natl. Acad. Sci. U.S.A.">
        <title>Genome sequence of the enterobacterial phytopathogen Erwinia carotovora subsp. atroseptica and characterization of virulence factors.</title>
        <authorList>
            <person name="Bell K.S."/>
            <person name="Sebaihia M."/>
            <person name="Pritchard L."/>
            <person name="Holden M.T.G."/>
            <person name="Hyman L.J."/>
            <person name="Holeva M.C."/>
            <person name="Thomson N.R."/>
            <person name="Bentley S.D."/>
            <person name="Churcher L.J.C."/>
            <person name="Mungall K."/>
            <person name="Atkin R."/>
            <person name="Bason N."/>
            <person name="Brooks K."/>
            <person name="Chillingworth T."/>
            <person name="Clark K."/>
            <person name="Doggett J."/>
            <person name="Fraser A."/>
            <person name="Hance Z."/>
            <person name="Hauser H."/>
            <person name="Jagels K."/>
            <person name="Moule S."/>
            <person name="Norbertczak H."/>
            <person name="Ormond D."/>
            <person name="Price C."/>
            <person name="Quail M.A."/>
            <person name="Sanders M."/>
            <person name="Walker D."/>
            <person name="Whitehead S."/>
            <person name="Salmond G.P.C."/>
            <person name="Birch P.R.J."/>
            <person name="Parkhill J."/>
            <person name="Toth I.K."/>
        </authorList>
    </citation>
    <scope>NUCLEOTIDE SEQUENCE [LARGE SCALE GENOMIC DNA]</scope>
    <source>
        <strain>SCRI 1043 / ATCC BAA-672</strain>
    </source>
</reference>
<organism>
    <name type="scientific">Pectobacterium atrosepticum (strain SCRI 1043 / ATCC BAA-672)</name>
    <name type="common">Erwinia carotovora subsp. atroseptica</name>
    <dbReference type="NCBI Taxonomy" id="218491"/>
    <lineage>
        <taxon>Bacteria</taxon>
        <taxon>Pseudomonadati</taxon>
        <taxon>Pseudomonadota</taxon>
        <taxon>Gammaproteobacteria</taxon>
        <taxon>Enterobacterales</taxon>
        <taxon>Pectobacteriaceae</taxon>
        <taxon>Pectobacterium</taxon>
    </lineage>
</organism>
<sequence length="187" mass="20774">MNLQHHFLIAMPALQDSVFKRSVVYICEHNEDGAMGLIINKPMDQFSVENVLEKLKIDPTPRDPAIRLDKPVFIGGPLADDRGFILHTPCSDFGSSISISEDTMITTSKDVLETLGTLKQPKNTLVALGYSAWENGQLEEELLENAWLTTPADKDILFHTPIAERWRAAARKLGIDIHNISTEAGHA</sequence>
<evidence type="ECO:0000255" key="1">
    <source>
        <dbReference type="HAMAP-Rule" id="MF_00758"/>
    </source>
</evidence>
<proteinExistence type="inferred from homology"/>
<comment type="similarity">
    <text evidence="1">Belongs to the UPF0301 (AlgH) family.</text>
</comment>
<gene>
    <name type="ordered locus">ECA3925</name>
</gene>
<feature type="chain" id="PRO_0000258823" description="UPF0301 protein ECA3925">
    <location>
        <begin position="1"/>
        <end position="187"/>
    </location>
</feature>